<accession>P60338</accession>
<accession>P07157</accession>
<protein>
    <recommendedName>
        <fullName evidence="2">Elongation factor Tu-A</fullName>
        <shortName evidence="2">EF-Tu-A</shortName>
        <ecNumber evidence="2">3.6.5.3</ecNumber>
    </recommendedName>
</protein>
<reference key="1">
    <citation type="journal article" date="1993" name="Nature">
        <title>Crystal structure of active elongation factor Tu reveals major domain rearrangements.</title>
        <authorList>
            <person name="Berchtold H."/>
            <person name="Reshetnikova L."/>
            <person name="Reiser C.O.A."/>
            <person name="Schirmer N.K."/>
            <person name="Sprinzl M."/>
            <person name="Hilgenfeld R."/>
        </authorList>
    </citation>
    <scope>X-RAY CRYSTALLOGRAPHY (1.7 ANGSTROMS)</scope>
</reference>
<reference key="2">
    <citation type="journal article" date="1997" name="Nat. Struct. Biol.">
        <title>Crystal structure of the EF-Tu.EF-Ts complex from Thermus thermophilus.</title>
        <authorList>
            <person name="Wang Y."/>
            <person name="Jiang Y."/>
            <person name="Meyering-Voss M."/>
            <person name="Sprinzl M."/>
            <person name="Sigler P.B."/>
        </authorList>
    </citation>
    <scope>X-RAY CRYSTALLOGRAPHY (3.0 ANGSTROMS) OF COMPLEX WITH EF-TS</scope>
</reference>
<reference key="3">
    <citation type="journal article" date="1999" name="Structure">
        <title>The crystal structure of Cys-tRNACys-EF-Tu-GDPNP reveals general and specific features in the ternary complex and in tRNA.</title>
        <authorList>
            <person name="Nissen P."/>
            <person name="Thirup S."/>
            <person name="Kjeldgaard M."/>
            <person name="Nyborg J."/>
        </authorList>
    </citation>
    <scope>X-RAY CRYSTALLOGRAPHY (2.6 ANGSTROMS)</scope>
</reference>
<gene>
    <name evidence="2" type="primary">tufA</name>
    <name type="synonym">tuf</name>
</gene>
<organism>
    <name type="scientific">Thermus thermophilus</name>
    <dbReference type="NCBI Taxonomy" id="274"/>
    <lineage>
        <taxon>Bacteria</taxon>
        <taxon>Thermotogati</taxon>
        <taxon>Deinococcota</taxon>
        <taxon>Deinococci</taxon>
        <taxon>Thermales</taxon>
        <taxon>Thermaceae</taxon>
        <taxon>Thermus</taxon>
    </lineage>
</organism>
<keyword id="KW-0002">3D-structure</keyword>
<keyword id="KW-0963">Cytoplasm</keyword>
<keyword id="KW-0251">Elongation factor</keyword>
<keyword id="KW-0342">GTP-binding</keyword>
<keyword id="KW-0378">Hydrolase</keyword>
<keyword id="KW-0460">Magnesium</keyword>
<keyword id="KW-0479">Metal-binding</keyword>
<keyword id="KW-0547">Nucleotide-binding</keyword>
<keyword id="KW-0597">Phosphoprotein</keyword>
<keyword id="KW-0648">Protein biosynthesis</keyword>
<feature type="initiator methionine" description="Removed">
    <location>
        <position position="1"/>
    </location>
</feature>
<feature type="chain" id="PRO_0000091422" description="Elongation factor Tu-A">
    <location>
        <begin position="2"/>
        <end position="406"/>
    </location>
</feature>
<feature type="domain" description="tr-type G">
    <location>
        <begin position="10"/>
        <end position="215"/>
    </location>
</feature>
<feature type="region of interest" description="G1" evidence="1">
    <location>
        <begin position="19"/>
        <end position="26"/>
    </location>
</feature>
<feature type="region of interest" description="G2" evidence="1">
    <location>
        <begin position="61"/>
        <end position="65"/>
    </location>
</feature>
<feature type="region of interest" description="G3" evidence="1">
    <location>
        <begin position="82"/>
        <end position="85"/>
    </location>
</feature>
<feature type="region of interest" description="G4" evidence="1">
    <location>
        <begin position="137"/>
        <end position="140"/>
    </location>
</feature>
<feature type="region of interest" description="G5" evidence="1">
    <location>
        <begin position="175"/>
        <end position="177"/>
    </location>
</feature>
<feature type="binding site">
    <location>
        <begin position="19"/>
        <end position="26"/>
    </location>
    <ligand>
        <name>GTP</name>
        <dbReference type="ChEBI" id="CHEBI:37565"/>
    </ligand>
</feature>
<feature type="binding site" evidence="2">
    <location>
        <position position="26"/>
    </location>
    <ligand>
        <name>Mg(2+)</name>
        <dbReference type="ChEBI" id="CHEBI:18420"/>
    </ligand>
</feature>
<feature type="binding site">
    <location>
        <begin position="82"/>
        <end position="86"/>
    </location>
    <ligand>
        <name>GTP</name>
        <dbReference type="ChEBI" id="CHEBI:37565"/>
    </ligand>
</feature>
<feature type="binding site">
    <location>
        <begin position="137"/>
        <end position="140"/>
    </location>
    <ligand>
        <name>GTP</name>
        <dbReference type="ChEBI" id="CHEBI:37565"/>
    </ligand>
</feature>
<feature type="modified residue" description="Phosphothreonine" evidence="1">
    <location>
        <position position="395"/>
    </location>
</feature>
<feature type="strand" evidence="5">
    <location>
        <begin position="12"/>
        <end position="18"/>
    </location>
</feature>
<feature type="helix" evidence="4">
    <location>
        <begin position="21"/>
        <end position="23"/>
    </location>
</feature>
<feature type="helix" evidence="5">
    <location>
        <begin position="25"/>
        <end position="39"/>
    </location>
</feature>
<feature type="helix" evidence="5">
    <location>
        <begin position="48"/>
        <end position="51"/>
    </location>
</feature>
<feature type="helix" evidence="5">
    <location>
        <begin position="55"/>
        <end position="60"/>
    </location>
</feature>
<feature type="strand" evidence="5">
    <location>
        <begin position="67"/>
        <end position="72"/>
    </location>
</feature>
<feature type="strand" evidence="5">
    <location>
        <begin position="77"/>
        <end position="82"/>
    </location>
</feature>
<feature type="helix" evidence="5">
    <location>
        <begin position="87"/>
        <end position="89"/>
    </location>
</feature>
<feature type="helix" evidence="5">
    <location>
        <begin position="90"/>
        <end position="97"/>
    </location>
</feature>
<feature type="strand" evidence="5">
    <location>
        <begin position="101"/>
        <end position="108"/>
    </location>
</feature>
<feature type="turn" evidence="5">
    <location>
        <begin position="109"/>
        <end position="111"/>
    </location>
</feature>
<feature type="helix" evidence="5">
    <location>
        <begin position="115"/>
        <end position="126"/>
    </location>
</feature>
<feature type="strand" evidence="5">
    <location>
        <begin position="132"/>
        <end position="137"/>
    </location>
</feature>
<feature type="helix" evidence="5">
    <location>
        <begin position="139"/>
        <end position="141"/>
    </location>
</feature>
<feature type="helix" evidence="5">
    <location>
        <begin position="145"/>
        <end position="161"/>
    </location>
</feature>
<feature type="turn" evidence="5">
    <location>
        <begin position="166"/>
        <end position="168"/>
    </location>
</feature>
<feature type="strand" evidence="5">
    <location>
        <begin position="171"/>
        <end position="173"/>
    </location>
</feature>
<feature type="helix" evidence="5">
    <location>
        <begin position="176"/>
        <end position="185"/>
    </location>
</feature>
<feature type="turn" evidence="6">
    <location>
        <begin position="191"/>
        <end position="193"/>
    </location>
</feature>
<feature type="helix" evidence="5">
    <location>
        <begin position="195"/>
        <end position="210"/>
    </location>
</feature>
<feature type="strand" evidence="6">
    <location>
        <begin position="218"/>
        <end position="220"/>
    </location>
</feature>
<feature type="strand" evidence="5">
    <location>
        <begin position="223"/>
        <end position="225"/>
    </location>
</feature>
<feature type="strand" evidence="5">
    <location>
        <begin position="228"/>
        <end position="232"/>
    </location>
</feature>
<feature type="turn" evidence="5">
    <location>
        <begin position="233"/>
        <end position="235"/>
    </location>
</feature>
<feature type="strand" evidence="5">
    <location>
        <begin position="236"/>
        <end position="242"/>
    </location>
</feature>
<feature type="strand" evidence="5">
    <location>
        <begin position="245"/>
        <end position="249"/>
    </location>
</feature>
<feature type="strand" evidence="5">
    <location>
        <begin position="253"/>
        <end position="262"/>
    </location>
</feature>
<feature type="strand" evidence="5">
    <location>
        <begin position="264"/>
        <end position="273"/>
    </location>
</feature>
<feature type="strand" evidence="5">
    <location>
        <begin position="279"/>
        <end position="282"/>
    </location>
</feature>
<feature type="strand" evidence="5">
    <location>
        <begin position="286"/>
        <end position="291"/>
    </location>
</feature>
<feature type="turn" evidence="5">
    <location>
        <begin position="296"/>
        <end position="298"/>
    </location>
</feature>
<feature type="strand" evidence="5">
    <location>
        <begin position="304"/>
        <end position="307"/>
    </location>
</feature>
<feature type="strand" evidence="5">
    <location>
        <begin position="314"/>
        <end position="323"/>
    </location>
</feature>
<feature type="helix" evidence="5">
    <location>
        <begin position="326"/>
        <end position="328"/>
    </location>
</feature>
<feature type="strand" evidence="5">
    <location>
        <begin position="342"/>
        <end position="345"/>
    </location>
</feature>
<feature type="strand" evidence="5">
    <location>
        <begin position="348"/>
        <end position="355"/>
    </location>
</feature>
<feature type="strand" evidence="5">
    <location>
        <begin position="368"/>
        <end position="379"/>
    </location>
</feature>
<feature type="strand" evidence="5">
    <location>
        <begin position="386"/>
        <end position="391"/>
    </location>
</feature>
<feature type="strand" evidence="5">
    <location>
        <begin position="394"/>
        <end position="404"/>
    </location>
</feature>
<dbReference type="EC" id="3.6.5.3" evidence="2"/>
<dbReference type="PIR" id="S00229">
    <property type="entry name" value="S00229"/>
</dbReference>
<dbReference type="PIR" id="S17146">
    <property type="entry name" value="S17146"/>
</dbReference>
<dbReference type="RefSeq" id="WP_011228847.1">
    <property type="nucleotide sequence ID" value="NZ_CP082323.1"/>
</dbReference>
<dbReference type="PDB" id="1AIP">
    <property type="method" value="X-ray"/>
    <property type="resolution" value="3.00 A"/>
    <property type="chains" value="A/B/E/F=2-406"/>
</dbReference>
<dbReference type="PDB" id="1EXM">
    <property type="method" value="X-ray"/>
    <property type="resolution" value="1.70 A"/>
    <property type="chains" value="A=2-406"/>
</dbReference>
<dbReference type="PDB" id="4H9G">
    <property type="method" value="X-ray"/>
    <property type="resolution" value="1.93 A"/>
    <property type="chains" value="A=2-406"/>
</dbReference>
<dbReference type="PDB" id="4LBV">
    <property type="method" value="X-ray"/>
    <property type="resolution" value="2.03 A"/>
    <property type="chains" value="A=3-406"/>
</dbReference>
<dbReference type="PDB" id="4LBW">
    <property type="method" value="X-ray"/>
    <property type="resolution" value="1.74 A"/>
    <property type="chains" value="A=3-406"/>
</dbReference>
<dbReference type="PDB" id="4LBY">
    <property type="method" value="X-ray"/>
    <property type="resolution" value="2.69 A"/>
    <property type="chains" value="A=3-406"/>
</dbReference>
<dbReference type="PDB" id="4LBZ">
    <property type="method" value="X-ray"/>
    <property type="resolution" value="2.22 A"/>
    <property type="chains" value="A=3-406"/>
</dbReference>
<dbReference type="PDB" id="4LC0">
    <property type="method" value="X-ray"/>
    <property type="resolution" value="2.22 A"/>
    <property type="chains" value="A=3-406"/>
</dbReference>
<dbReference type="PDBsum" id="1AIP"/>
<dbReference type="PDBsum" id="1EXM"/>
<dbReference type="PDBsum" id="4H9G"/>
<dbReference type="PDBsum" id="4LBV"/>
<dbReference type="PDBsum" id="4LBW"/>
<dbReference type="PDBsum" id="4LBY"/>
<dbReference type="PDBsum" id="4LBZ"/>
<dbReference type="PDBsum" id="4LC0"/>
<dbReference type="SMR" id="P60338"/>
<dbReference type="DIP" id="DIP-61168N"/>
<dbReference type="IntAct" id="P60338">
    <property type="interactions" value="1"/>
</dbReference>
<dbReference type="GeneID" id="3167925"/>
<dbReference type="BRENDA" id="3.6.5.3">
    <property type="organism ID" value="2305"/>
</dbReference>
<dbReference type="EvolutionaryTrace" id="P60338"/>
<dbReference type="GO" id="GO:0005829">
    <property type="term" value="C:cytosol"/>
    <property type="evidence" value="ECO:0007669"/>
    <property type="project" value="TreeGrafter"/>
</dbReference>
<dbReference type="GO" id="GO:0005525">
    <property type="term" value="F:GTP binding"/>
    <property type="evidence" value="ECO:0007669"/>
    <property type="project" value="UniProtKB-UniRule"/>
</dbReference>
<dbReference type="GO" id="GO:0003924">
    <property type="term" value="F:GTPase activity"/>
    <property type="evidence" value="ECO:0007669"/>
    <property type="project" value="InterPro"/>
</dbReference>
<dbReference type="GO" id="GO:0003746">
    <property type="term" value="F:translation elongation factor activity"/>
    <property type="evidence" value="ECO:0007669"/>
    <property type="project" value="UniProtKB-UniRule"/>
</dbReference>
<dbReference type="CDD" id="cd01884">
    <property type="entry name" value="EF_Tu"/>
    <property type="match status" value="1"/>
</dbReference>
<dbReference type="CDD" id="cd03697">
    <property type="entry name" value="EFTU_II"/>
    <property type="match status" value="1"/>
</dbReference>
<dbReference type="CDD" id="cd03707">
    <property type="entry name" value="EFTU_III"/>
    <property type="match status" value="1"/>
</dbReference>
<dbReference type="FunFam" id="2.40.30.10:FF:000001">
    <property type="entry name" value="Elongation factor Tu"/>
    <property type="match status" value="1"/>
</dbReference>
<dbReference type="FunFam" id="3.40.50.300:FF:000003">
    <property type="entry name" value="Elongation factor Tu"/>
    <property type="match status" value="1"/>
</dbReference>
<dbReference type="Gene3D" id="3.40.50.300">
    <property type="entry name" value="P-loop containing nucleotide triphosphate hydrolases"/>
    <property type="match status" value="1"/>
</dbReference>
<dbReference type="Gene3D" id="2.40.30.10">
    <property type="entry name" value="Translation factors"/>
    <property type="match status" value="2"/>
</dbReference>
<dbReference type="HAMAP" id="MF_00118_B">
    <property type="entry name" value="EF_Tu_B"/>
    <property type="match status" value="1"/>
</dbReference>
<dbReference type="InterPro" id="IPR041709">
    <property type="entry name" value="EF-Tu_GTP-bd"/>
</dbReference>
<dbReference type="InterPro" id="IPR050055">
    <property type="entry name" value="EF-Tu_GTPase"/>
</dbReference>
<dbReference type="InterPro" id="IPR004161">
    <property type="entry name" value="EFTu-like_2"/>
</dbReference>
<dbReference type="InterPro" id="IPR033720">
    <property type="entry name" value="EFTU_2"/>
</dbReference>
<dbReference type="InterPro" id="IPR031157">
    <property type="entry name" value="G_TR_CS"/>
</dbReference>
<dbReference type="InterPro" id="IPR027417">
    <property type="entry name" value="P-loop_NTPase"/>
</dbReference>
<dbReference type="InterPro" id="IPR005225">
    <property type="entry name" value="Small_GTP-bd"/>
</dbReference>
<dbReference type="InterPro" id="IPR000795">
    <property type="entry name" value="T_Tr_GTP-bd_dom"/>
</dbReference>
<dbReference type="InterPro" id="IPR009000">
    <property type="entry name" value="Transl_B-barrel_sf"/>
</dbReference>
<dbReference type="InterPro" id="IPR009001">
    <property type="entry name" value="Transl_elong_EF1A/Init_IF2_C"/>
</dbReference>
<dbReference type="InterPro" id="IPR004541">
    <property type="entry name" value="Transl_elong_EFTu/EF1A_bac/org"/>
</dbReference>
<dbReference type="InterPro" id="IPR004160">
    <property type="entry name" value="Transl_elong_EFTu/EF1A_C"/>
</dbReference>
<dbReference type="NCBIfam" id="TIGR00485">
    <property type="entry name" value="EF-Tu"/>
    <property type="match status" value="1"/>
</dbReference>
<dbReference type="NCBIfam" id="NF000766">
    <property type="entry name" value="PRK00049.1"/>
    <property type="match status" value="1"/>
</dbReference>
<dbReference type="NCBIfam" id="NF009372">
    <property type="entry name" value="PRK12735.1"/>
    <property type="match status" value="1"/>
</dbReference>
<dbReference type="NCBIfam" id="NF009373">
    <property type="entry name" value="PRK12736.1"/>
    <property type="match status" value="1"/>
</dbReference>
<dbReference type="NCBIfam" id="TIGR00231">
    <property type="entry name" value="small_GTP"/>
    <property type="match status" value="1"/>
</dbReference>
<dbReference type="PANTHER" id="PTHR43721:SF22">
    <property type="entry name" value="ELONGATION FACTOR TU, MITOCHONDRIAL"/>
    <property type="match status" value="1"/>
</dbReference>
<dbReference type="PANTHER" id="PTHR43721">
    <property type="entry name" value="ELONGATION FACTOR TU-RELATED"/>
    <property type="match status" value="1"/>
</dbReference>
<dbReference type="Pfam" id="PF00009">
    <property type="entry name" value="GTP_EFTU"/>
    <property type="match status" value="1"/>
</dbReference>
<dbReference type="Pfam" id="PF03144">
    <property type="entry name" value="GTP_EFTU_D2"/>
    <property type="match status" value="1"/>
</dbReference>
<dbReference type="Pfam" id="PF03143">
    <property type="entry name" value="GTP_EFTU_D3"/>
    <property type="match status" value="1"/>
</dbReference>
<dbReference type="PRINTS" id="PR00315">
    <property type="entry name" value="ELONGATNFCT"/>
</dbReference>
<dbReference type="SUPFAM" id="SSF50465">
    <property type="entry name" value="EF-Tu/eEF-1alpha/eIF2-gamma C-terminal domain"/>
    <property type="match status" value="1"/>
</dbReference>
<dbReference type="SUPFAM" id="SSF52540">
    <property type="entry name" value="P-loop containing nucleoside triphosphate hydrolases"/>
    <property type="match status" value="1"/>
</dbReference>
<dbReference type="SUPFAM" id="SSF50447">
    <property type="entry name" value="Translation proteins"/>
    <property type="match status" value="1"/>
</dbReference>
<dbReference type="PROSITE" id="PS00301">
    <property type="entry name" value="G_TR_1"/>
    <property type="match status" value="1"/>
</dbReference>
<dbReference type="PROSITE" id="PS51722">
    <property type="entry name" value="G_TR_2"/>
    <property type="match status" value="1"/>
</dbReference>
<name>EFTU1_THETH</name>
<comment type="function">
    <text evidence="2">GTP hydrolase that promotes the GTP-dependent binding of aminoacyl-tRNA to the A-site of ribosomes during protein biosynthesis.</text>
</comment>
<comment type="catalytic activity">
    <reaction evidence="2">
        <text>GTP + H2O = GDP + phosphate + H(+)</text>
        <dbReference type="Rhea" id="RHEA:19669"/>
        <dbReference type="ChEBI" id="CHEBI:15377"/>
        <dbReference type="ChEBI" id="CHEBI:15378"/>
        <dbReference type="ChEBI" id="CHEBI:37565"/>
        <dbReference type="ChEBI" id="CHEBI:43474"/>
        <dbReference type="ChEBI" id="CHEBI:58189"/>
        <dbReference type="EC" id="3.6.5.3"/>
    </reaction>
    <physiologicalReaction direction="left-to-right" evidence="2">
        <dbReference type="Rhea" id="RHEA:19670"/>
    </physiologicalReaction>
</comment>
<comment type="subunit">
    <text evidence="2">Monomer.</text>
</comment>
<comment type="subcellular location">
    <subcellularLocation>
        <location>Cytoplasm</location>
    </subcellularLocation>
</comment>
<comment type="PTM">
    <text evidence="1">Phosphorylated on a threonine.</text>
</comment>
<comment type="similarity">
    <text evidence="2">Belongs to the TRAFAC class translation factor GTPase superfamily. Classic translation factor GTPase family. EF-Tu/EF-1A subfamily.</text>
</comment>
<comment type="caution">
    <text evidence="3">The sequence shown here has been extracted from PDB entry 1EXM.</text>
</comment>
<proteinExistence type="evidence at protein level"/>
<sequence>MAKGEFVRTKPHVNVGTIGHVDHGKTTLTAALTYVAAAENPNVEVKDYGDIDKAPEERARGITINTAHVEYETAKRHYSHVDCPGHADYIKNMITGAAQMDGAILVVSAADGPMPQTREHILLARQVGVPYIVVFMNKVDMVDDPELLDLVEMEVRDLLNQYEFPGDEVPVIRGSALLALEQMHRNPKTRRGENEWVDKIWELLDAIDEYIPTPVRDVDKPFLMPVEDVFTITGRGTVATGRIERGKVKVGDEVEIVGLAPETRRTVVTGVEMHRKTLQEGIAGDNVGVLLRGVSREEVERGQVLAKPGSITPHTKFEASVYVLKKEEGGRHTGFFSGYRPQFYFRTTDVTGVVQLPPGVEMVMPGDNVTFTVELIKPVALEEGLRFAIREGGRTVGAGVVTKILE</sequence>
<evidence type="ECO:0000250" key="1"/>
<evidence type="ECO:0000255" key="2">
    <source>
        <dbReference type="HAMAP-Rule" id="MF_00118"/>
    </source>
</evidence>
<evidence type="ECO:0000305" key="3"/>
<evidence type="ECO:0007829" key="4">
    <source>
        <dbReference type="PDB" id="1AIP"/>
    </source>
</evidence>
<evidence type="ECO:0007829" key="5">
    <source>
        <dbReference type="PDB" id="1EXM"/>
    </source>
</evidence>
<evidence type="ECO:0007829" key="6">
    <source>
        <dbReference type="PDB" id="4LBW"/>
    </source>
</evidence>